<name>EFHD2_BOVIN</name>
<gene>
    <name type="primary">EFHD2</name>
    <name type="synonym">SWS1</name>
</gene>
<organism>
    <name type="scientific">Bos taurus</name>
    <name type="common">Bovine</name>
    <dbReference type="NCBI Taxonomy" id="9913"/>
    <lineage>
        <taxon>Eukaryota</taxon>
        <taxon>Metazoa</taxon>
        <taxon>Chordata</taxon>
        <taxon>Craniata</taxon>
        <taxon>Vertebrata</taxon>
        <taxon>Euteleostomi</taxon>
        <taxon>Mammalia</taxon>
        <taxon>Eutheria</taxon>
        <taxon>Laurasiatheria</taxon>
        <taxon>Artiodactyla</taxon>
        <taxon>Ruminantia</taxon>
        <taxon>Pecora</taxon>
        <taxon>Bovidae</taxon>
        <taxon>Bovinae</taxon>
        <taxon>Bos</taxon>
    </lineage>
</organism>
<evidence type="ECO:0000250" key="1"/>
<evidence type="ECO:0000250" key="2">
    <source>
        <dbReference type="UniProtKB" id="Q96C19"/>
    </source>
</evidence>
<evidence type="ECO:0000250" key="3">
    <source>
        <dbReference type="UniProtKB" id="Q9D8Y0"/>
    </source>
</evidence>
<evidence type="ECO:0000255" key="4">
    <source>
        <dbReference type="PROSITE-ProRule" id="PRU00448"/>
    </source>
</evidence>
<evidence type="ECO:0000256" key="5">
    <source>
        <dbReference type="SAM" id="MobiDB-lite"/>
    </source>
</evidence>
<evidence type="ECO:0000305" key="6"/>
<sequence>MATDELASKLSRRLQMEGEGGGEAPEQPGLNGAAAAAAAAGAPDETAEALGSADEELSAKLLRRADLNQGIGEPQSPSRRVFNPYTEFKEFSRKQIKDMEKMFKEYDAGRDGFIDLMELKLMMEKLGAPQTHLGLKNMIKEVDEDFDSKLSFREFLLIFRKAAAGELQEDSGLHVLARLSEIDVSTEGVKGAKSFFEAKVQAMNVSSRFEEEIKAEQEERKKQAEEMKQRKAAFKELQSTFK</sequence>
<protein>
    <recommendedName>
        <fullName>EF-hand domain-containing protein D2</fullName>
    </recommendedName>
    <alternativeName>
        <fullName>Swiprosin-1</fullName>
    </alternativeName>
</protein>
<reference key="1">
    <citation type="submission" date="2007-04" db="EMBL/GenBank/DDBJ databases">
        <authorList>
            <consortium name="NIH - Mammalian Gene Collection (MGC) project"/>
        </authorList>
    </citation>
    <scope>NUCLEOTIDE SEQUENCE [LARGE SCALE MRNA]</scope>
    <source>
        <strain>Hereford</strain>
        <tissue>Hippocampus</tissue>
    </source>
</reference>
<keyword id="KW-0007">Acetylation</keyword>
<keyword id="KW-0106">Calcium</keyword>
<keyword id="KW-0472">Membrane</keyword>
<keyword id="KW-0479">Metal-binding</keyword>
<keyword id="KW-0597">Phosphoprotein</keyword>
<keyword id="KW-1185">Reference proteome</keyword>
<keyword id="KW-0677">Repeat</keyword>
<feature type="initiator methionine" description="Removed" evidence="2">
    <location>
        <position position="1"/>
    </location>
</feature>
<feature type="chain" id="PRO_0000319961" description="EF-hand domain-containing protein D2">
    <location>
        <begin position="2"/>
        <end position="242"/>
    </location>
</feature>
<feature type="domain" description="EF-hand 1" evidence="4">
    <location>
        <begin position="94"/>
        <end position="129"/>
    </location>
</feature>
<feature type="domain" description="EF-hand 2" evidence="4">
    <location>
        <begin position="130"/>
        <end position="165"/>
    </location>
</feature>
<feature type="region of interest" description="Disordered" evidence="5">
    <location>
        <begin position="1"/>
        <end position="53"/>
    </location>
</feature>
<feature type="compositionally biased region" description="Low complexity" evidence="5">
    <location>
        <begin position="32"/>
        <end position="42"/>
    </location>
</feature>
<feature type="binding site" evidence="6">
    <location>
        <position position="107"/>
    </location>
    <ligand>
        <name>Ca(2+)</name>
        <dbReference type="ChEBI" id="CHEBI:29108"/>
        <label>1</label>
    </ligand>
</feature>
<feature type="binding site" evidence="6">
    <location>
        <position position="111"/>
    </location>
    <ligand>
        <name>Ca(2+)</name>
        <dbReference type="ChEBI" id="CHEBI:29108"/>
        <label>1</label>
    </ligand>
</feature>
<feature type="binding site" evidence="6">
    <location>
        <position position="118"/>
    </location>
    <ligand>
        <name>Ca(2+)</name>
        <dbReference type="ChEBI" id="CHEBI:29108"/>
        <label>1</label>
    </ligand>
</feature>
<feature type="binding site" evidence="6">
    <location>
        <position position="143"/>
    </location>
    <ligand>
        <name>Ca(2+)</name>
        <dbReference type="ChEBI" id="CHEBI:29108"/>
        <label>2</label>
    </ligand>
</feature>
<feature type="binding site" evidence="6">
    <location>
        <position position="145"/>
    </location>
    <ligand>
        <name>Ca(2+)</name>
        <dbReference type="ChEBI" id="CHEBI:29108"/>
        <label>2</label>
    </ligand>
</feature>
<feature type="binding site" evidence="6">
    <location>
        <position position="147"/>
    </location>
    <ligand>
        <name>Ca(2+)</name>
        <dbReference type="ChEBI" id="CHEBI:29108"/>
        <label>2</label>
    </ligand>
</feature>
<feature type="binding site" evidence="6">
    <location>
        <position position="149"/>
    </location>
    <ligand>
        <name>Ca(2+)</name>
        <dbReference type="ChEBI" id="CHEBI:29108"/>
        <label>2</label>
    </ligand>
</feature>
<feature type="binding site" evidence="6">
    <location>
        <position position="154"/>
    </location>
    <ligand>
        <name>Ca(2+)</name>
        <dbReference type="ChEBI" id="CHEBI:29108"/>
        <label>2</label>
    </ligand>
</feature>
<feature type="modified residue" description="N-acetylalanine" evidence="2">
    <location>
        <position position="2"/>
    </location>
</feature>
<feature type="modified residue" description="Phosphoserine" evidence="2">
    <location>
        <position position="11"/>
    </location>
</feature>
<feature type="modified residue" description="Phosphoserine" evidence="2">
    <location>
        <position position="76"/>
    </location>
</feature>
<feature type="modified residue" description="Phosphoserine" evidence="2">
    <location>
        <position position="78"/>
    </location>
</feature>
<feature type="modified residue" description="Phosphotyrosine" evidence="3">
    <location>
        <position position="85"/>
    </location>
</feature>
<feature type="modified residue" description="N6-acetyllysine" evidence="2">
    <location>
        <position position="235"/>
    </location>
</feature>
<comment type="function">
    <text evidence="1">May regulate B-cell receptor (BCR)-induced immature and primary B-cell apoptosis. Plays a role as negative regulator of the canonical NF-kappa-B-activating branch. Controls spontaneous apoptosis through the regulation of BCL2L1 abundance.</text>
</comment>
<comment type="subunit">
    <text evidence="1">Interacts with CASP9; with inactive form.</text>
</comment>
<comment type="subcellular location">
    <subcellularLocation>
        <location evidence="1">Membrane raft</location>
    </subcellularLocation>
    <text evidence="1">In a mouse immature B-cell line WEHI-231.</text>
</comment>
<proteinExistence type="evidence at transcript level"/>
<accession>A5D7A0</accession>
<dbReference type="EMBL" id="BC140480">
    <property type="protein sequence ID" value="AAI40481.1"/>
    <property type="molecule type" value="mRNA"/>
</dbReference>
<dbReference type="RefSeq" id="NP_001096715.1">
    <property type="nucleotide sequence ID" value="NM_001103245.1"/>
</dbReference>
<dbReference type="SMR" id="A5D7A0"/>
<dbReference type="FunCoup" id="A5D7A0">
    <property type="interactions" value="731"/>
</dbReference>
<dbReference type="STRING" id="9913.ENSBTAP00000042244"/>
<dbReference type="PaxDb" id="9913-ENSBTAP00000042244"/>
<dbReference type="PeptideAtlas" id="A5D7A0"/>
<dbReference type="Ensembl" id="ENSBTAT00000044780.4">
    <property type="protein sequence ID" value="ENSBTAP00000042244.3"/>
    <property type="gene ID" value="ENSBTAG00000009048.6"/>
</dbReference>
<dbReference type="GeneID" id="514259"/>
<dbReference type="KEGG" id="bta:514259"/>
<dbReference type="CTD" id="79180"/>
<dbReference type="VEuPathDB" id="HostDB:ENSBTAG00000009048"/>
<dbReference type="VGNC" id="VGNC:28353">
    <property type="gene designation" value="EFHD2"/>
</dbReference>
<dbReference type="eggNOG" id="KOG0041">
    <property type="taxonomic scope" value="Eukaryota"/>
</dbReference>
<dbReference type="GeneTree" id="ENSGT00390000012058"/>
<dbReference type="HOGENOM" id="CLU_094429_0_0_1"/>
<dbReference type="InParanoid" id="A5D7A0"/>
<dbReference type="OMA" id="ERMFKQY"/>
<dbReference type="OrthoDB" id="6572480at2759"/>
<dbReference type="TreeFam" id="TF320736"/>
<dbReference type="Reactome" id="R-BTA-9013405">
    <property type="pathway name" value="RHOD GTPase cycle"/>
</dbReference>
<dbReference type="Proteomes" id="UP000009136">
    <property type="component" value="Chromosome 16"/>
</dbReference>
<dbReference type="Bgee" id="ENSBTAG00000009048">
    <property type="expression patterns" value="Expressed in monocyte and 106 other cell types or tissues"/>
</dbReference>
<dbReference type="GO" id="GO:0045121">
    <property type="term" value="C:membrane raft"/>
    <property type="evidence" value="ECO:0007669"/>
    <property type="project" value="UniProtKB-SubCell"/>
</dbReference>
<dbReference type="GO" id="GO:0005509">
    <property type="term" value="F:calcium ion binding"/>
    <property type="evidence" value="ECO:0000318"/>
    <property type="project" value="GO_Central"/>
</dbReference>
<dbReference type="CDD" id="cd00051">
    <property type="entry name" value="EFh"/>
    <property type="match status" value="1"/>
</dbReference>
<dbReference type="FunFam" id="1.10.238.10:FF:000112">
    <property type="entry name" value="EF-hand domain family, member D2"/>
    <property type="match status" value="1"/>
</dbReference>
<dbReference type="Gene3D" id="1.10.238.10">
    <property type="entry name" value="EF-hand"/>
    <property type="match status" value="1"/>
</dbReference>
<dbReference type="InterPro" id="IPR049025">
    <property type="entry name" value="AIF-1_EF_pair"/>
</dbReference>
<dbReference type="InterPro" id="IPR011992">
    <property type="entry name" value="EF-hand-dom_pair"/>
</dbReference>
<dbReference type="InterPro" id="IPR002048">
    <property type="entry name" value="EF_hand_dom"/>
</dbReference>
<dbReference type="InterPro" id="IPR040365">
    <property type="entry name" value="EFHD1/2"/>
</dbReference>
<dbReference type="PANTHER" id="PTHR13025">
    <property type="entry name" value="EF-HAND DOMAIN-CONTAINING PROTEIN D"/>
    <property type="match status" value="1"/>
</dbReference>
<dbReference type="PANTHER" id="PTHR13025:SF2">
    <property type="entry name" value="EF-HAND DOMAIN-CONTAINING PROTEIN D2"/>
    <property type="match status" value="1"/>
</dbReference>
<dbReference type="Pfam" id="PF21008">
    <property type="entry name" value="AIF-1"/>
    <property type="match status" value="1"/>
</dbReference>
<dbReference type="SMART" id="SM00054">
    <property type="entry name" value="EFh"/>
    <property type="match status" value="2"/>
</dbReference>
<dbReference type="SUPFAM" id="SSF47473">
    <property type="entry name" value="EF-hand"/>
    <property type="match status" value="1"/>
</dbReference>
<dbReference type="PROSITE" id="PS50222">
    <property type="entry name" value="EF_HAND_2"/>
    <property type="match status" value="2"/>
</dbReference>